<comment type="function">
    <text evidence="1">Catalyzes the condensation of (S)-aspartate-beta-semialdehyde [(S)-ASA] and pyruvate to 4-hydroxy-tetrahydrodipicolinate (HTPA).</text>
</comment>
<comment type="catalytic activity">
    <reaction evidence="1">
        <text>L-aspartate 4-semialdehyde + pyruvate = (2S,4S)-4-hydroxy-2,3,4,5-tetrahydrodipicolinate + H2O + H(+)</text>
        <dbReference type="Rhea" id="RHEA:34171"/>
        <dbReference type="ChEBI" id="CHEBI:15361"/>
        <dbReference type="ChEBI" id="CHEBI:15377"/>
        <dbReference type="ChEBI" id="CHEBI:15378"/>
        <dbReference type="ChEBI" id="CHEBI:67139"/>
        <dbReference type="ChEBI" id="CHEBI:537519"/>
        <dbReference type="EC" id="4.3.3.7"/>
    </reaction>
</comment>
<comment type="pathway">
    <text evidence="1">Amino-acid biosynthesis; L-lysine biosynthesis via DAP pathway; (S)-tetrahydrodipicolinate from L-aspartate: step 3/4.</text>
</comment>
<comment type="subunit">
    <text evidence="1">Homotetramer; dimer of dimers.</text>
</comment>
<comment type="subcellular location">
    <subcellularLocation>
        <location evidence="1">Cytoplasm</location>
    </subcellularLocation>
</comment>
<comment type="similarity">
    <text evidence="1">Belongs to the DapA family.</text>
</comment>
<comment type="caution">
    <text evidence="2">Was originally thought to be a dihydrodipicolinate synthase (DHDPS), catalyzing the condensation of (S)-aspartate-beta-semialdehyde [(S)-ASA] and pyruvate to dihydrodipicolinate (DHDP). However, it was shown in E.coli that the product of the enzymatic reaction is not dihydrodipicolinate but in fact (4S)-4-hydroxy-2,3,4,5-tetrahydro-(2S)-dipicolinic acid (HTPA), and that the consecutive dehydration reaction leading to DHDP is not spontaneous but catalyzed by DapB.</text>
</comment>
<organism>
    <name type="scientific">Rickettsia bellii (strain RML369-C)</name>
    <dbReference type="NCBI Taxonomy" id="336407"/>
    <lineage>
        <taxon>Bacteria</taxon>
        <taxon>Pseudomonadati</taxon>
        <taxon>Pseudomonadota</taxon>
        <taxon>Alphaproteobacteria</taxon>
        <taxon>Rickettsiales</taxon>
        <taxon>Rickettsiaceae</taxon>
        <taxon>Rickettsieae</taxon>
        <taxon>Rickettsia</taxon>
        <taxon>belli group</taxon>
    </lineage>
</organism>
<dbReference type="EC" id="4.3.3.7" evidence="1"/>
<dbReference type="EMBL" id="CP000087">
    <property type="protein sequence ID" value="ABE04821.1"/>
    <property type="molecule type" value="Genomic_DNA"/>
</dbReference>
<dbReference type="RefSeq" id="WP_011477408.1">
    <property type="nucleotide sequence ID" value="NC_007940.1"/>
</dbReference>
<dbReference type="SMR" id="Q1RIJ3"/>
<dbReference type="KEGG" id="rbe:RBE_0740"/>
<dbReference type="eggNOG" id="COG0329">
    <property type="taxonomic scope" value="Bacteria"/>
</dbReference>
<dbReference type="HOGENOM" id="CLU_049343_7_1_5"/>
<dbReference type="OrthoDB" id="9782828at2"/>
<dbReference type="UniPathway" id="UPA00034">
    <property type="reaction ID" value="UER00017"/>
</dbReference>
<dbReference type="Proteomes" id="UP000001951">
    <property type="component" value="Chromosome"/>
</dbReference>
<dbReference type="GO" id="GO:0005737">
    <property type="term" value="C:cytoplasm"/>
    <property type="evidence" value="ECO:0007669"/>
    <property type="project" value="UniProtKB-SubCell"/>
</dbReference>
<dbReference type="GO" id="GO:0008700">
    <property type="term" value="F:(R,S)-4-hydroxy-2-oxoglutarate aldolase activity"/>
    <property type="evidence" value="ECO:0007669"/>
    <property type="project" value="TreeGrafter"/>
</dbReference>
<dbReference type="GO" id="GO:0008840">
    <property type="term" value="F:4-hydroxy-tetrahydrodipicolinate synthase activity"/>
    <property type="evidence" value="ECO:0007669"/>
    <property type="project" value="UniProtKB-UniRule"/>
</dbReference>
<dbReference type="GO" id="GO:0019877">
    <property type="term" value="P:diaminopimelate biosynthetic process"/>
    <property type="evidence" value="ECO:0007669"/>
    <property type="project" value="UniProtKB-UniRule"/>
</dbReference>
<dbReference type="GO" id="GO:0009436">
    <property type="term" value="P:glyoxylate catabolic process"/>
    <property type="evidence" value="ECO:0007669"/>
    <property type="project" value="TreeGrafter"/>
</dbReference>
<dbReference type="GO" id="GO:0009089">
    <property type="term" value="P:lysine biosynthetic process via diaminopimelate"/>
    <property type="evidence" value="ECO:0007669"/>
    <property type="project" value="UniProtKB-UniRule"/>
</dbReference>
<dbReference type="CDD" id="cd00950">
    <property type="entry name" value="DHDPS"/>
    <property type="match status" value="1"/>
</dbReference>
<dbReference type="Gene3D" id="3.20.20.70">
    <property type="entry name" value="Aldolase class I"/>
    <property type="match status" value="1"/>
</dbReference>
<dbReference type="HAMAP" id="MF_00418">
    <property type="entry name" value="DapA"/>
    <property type="match status" value="1"/>
</dbReference>
<dbReference type="InterPro" id="IPR013785">
    <property type="entry name" value="Aldolase_TIM"/>
</dbReference>
<dbReference type="InterPro" id="IPR005263">
    <property type="entry name" value="DapA"/>
</dbReference>
<dbReference type="InterPro" id="IPR002220">
    <property type="entry name" value="DapA-like"/>
</dbReference>
<dbReference type="InterPro" id="IPR020625">
    <property type="entry name" value="Schiff_base-form_aldolases_AS"/>
</dbReference>
<dbReference type="InterPro" id="IPR020624">
    <property type="entry name" value="Schiff_base-form_aldolases_CS"/>
</dbReference>
<dbReference type="NCBIfam" id="TIGR00674">
    <property type="entry name" value="dapA"/>
    <property type="match status" value="1"/>
</dbReference>
<dbReference type="PANTHER" id="PTHR12128:SF66">
    <property type="entry name" value="4-HYDROXY-2-OXOGLUTARATE ALDOLASE, MITOCHONDRIAL"/>
    <property type="match status" value="1"/>
</dbReference>
<dbReference type="PANTHER" id="PTHR12128">
    <property type="entry name" value="DIHYDRODIPICOLINATE SYNTHASE"/>
    <property type="match status" value="1"/>
</dbReference>
<dbReference type="Pfam" id="PF00701">
    <property type="entry name" value="DHDPS"/>
    <property type="match status" value="1"/>
</dbReference>
<dbReference type="PIRSF" id="PIRSF001365">
    <property type="entry name" value="DHDPS"/>
    <property type="match status" value="1"/>
</dbReference>
<dbReference type="PRINTS" id="PR00146">
    <property type="entry name" value="DHPICSNTHASE"/>
</dbReference>
<dbReference type="SMART" id="SM01130">
    <property type="entry name" value="DHDPS"/>
    <property type="match status" value="1"/>
</dbReference>
<dbReference type="SUPFAM" id="SSF51569">
    <property type="entry name" value="Aldolase"/>
    <property type="match status" value="1"/>
</dbReference>
<dbReference type="PROSITE" id="PS00665">
    <property type="entry name" value="DHDPS_1"/>
    <property type="match status" value="1"/>
</dbReference>
<dbReference type="PROSITE" id="PS00666">
    <property type="entry name" value="DHDPS_2"/>
    <property type="match status" value="1"/>
</dbReference>
<gene>
    <name evidence="1" type="primary">dapA</name>
    <name type="ordered locus">RBE_0740</name>
</gene>
<sequence>MNNIFKGLITAIITPFRDNKLDLNALEKILEYQINAEVNAVVIAGSTGEGSSLSFEEYKLLLQTAKDIVNKRIPVISGCSSNNTACAIELAAESTKIGVDGFMISPPSYLKPTQGGIYKHFEAIHEASNLPIMLYSVPSRTGVDFTDETILKLSKLSRILALKDAGIDLERPLRIKSVINKEFNLLCGNDDLSLAFNAQGGVGCVSVASNITPKLCKELQEKWHNNDVKGALGIHQRLLPLYKALFVESNPIPVKYAMYYLGFCTNEIRLPLTEATDTTKKQIEEIITSLSIKV</sequence>
<evidence type="ECO:0000255" key="1">
    <source>
        <dbReference type="HAMAP-Rule" id="MF_00418"/>
    </source>
</evidence>
<evidence type="ECO:0000305" key="2"/>
<feature type="chain" id="PRO_0000277954" description="4-hydroxy-tetrahydrodipicolinate synthase">
    <location>
        <begin position="1"/>
        <end position="294"/>
    </location>
</feature>
<feature type="active site" description="Proton donor/acceptor" evidence="1">
    <location>
        <position position="135"/>
    </location>
</feature>
<feature type="active site" description="Schiff-base intermediate with substrate" evidence="1">
    <location>
        <position position="163"/>
    </location>
</feature>
<feature type="binding site" evidence="1">
    <location>
        <position position="47"/>
    </location>
    <ligand>
        <name>pyruvate</name>
        <dbReference type="ChEBI" id="CHEBI:15361"/>
    </ligand>
</feature>
<feature type="binding site" evidence="1">
    <location>
        <position position="205"/>
    </location>
    <ligand>
        <name>pyruvate</name>
        <dbReference type="ChEBI" id="CHEBI:15361"/>
    </ligand>
</feature>
<feature type="site" description="Part of a proton relay during catalysis" evidence="1">
    <location>
        <position position="46"/>
    </location>
</feature>
<feature type="site" description="Part of a proton relay during catalysis" evidence="1">
    <location>
        <position position="109"/>
    </location>
</feature>
<reference key="1">
    <citation type="journal article" date="2006" name="PLoS Genet.">
        <title>Genome sequence of Rickettsia bellii illuminates the role of amoebae in gene exchanges between intracellular pathogens.</title>
        <authorList>
            <person name="Ogata H."/>
            <person name="La Scola B."/>
            <person name="Audic S."/>
            <person name="Renesto P."/>
            <person name="Blanc G."/>
            <person name="Robert C."/>
            <person name="Fournier P.-E."/>
            <person name="Claverie J.-M."/>
            <person name="Raoult D."/>
        </authorList>
    </citation>
    <scope>NUCLEOTIDE SEQUENCE [LARGE SCALE GENOMIC DNA]</scope>
    <source>
        <strain>RML369-C</strain>
    </source>
</reference>
<protein>
    <recommendedName>
        <fullName evidence="1">4-hydroxy-tetrahydrodipicolinate synthase</fullName>
        <shortName evidence="1">HTPA synthase</shortName>
        <ecNumber evidence="1">4.3.3.7</ecNumber>
    </recommendedName>
</protein>
<proteinExistence type="inferred from homology"/>
<keyword id="KW-0028">Amino-acid biosynthesis</keyword>
<keyword id="KW-0963">Cytoplasm</keyword>
<keyword id="KW-0220">Diaminopimelate biosynthesis</keyword>
<keyword id="KW-0456">Lyase</keyword>
<keyword id="KW-0457">Lysine biosynthesis</keyword>
<keyword id="KW-0704">Schiff base</keyword>
<name>DAPA_RICBR</name>
<accession>Q1RIJ3</accession>